<proteinExistence type="inferred from homology"/>
<accession>B4TVR9</accession>
<organism>
    <name type="scientific">Salmonella schwarzengrund (strain CVM19633)</name>
    <dbReference type="NCBI Taxonomy" id="439843"/>
    <lineage>
        <taxon>Bacteria</taxon>
        <taxon>Pseudomonadati</taxon>
        <taxon>Pseudomonadota</taxon>
        <taxon>Gammaproteobacteria</taxon>
        <taxon>Enterobacterales</taxon>
        <taxon>Enterobacteriaceae</taxon>
        <taxon>Salmonella</taxon>
    </lineage>
</organism>
<sequence>MKRTKSIHHASFRKSWSARHLTPVALAVTAVFMLAGCEKSDETVSLYQNADDCSAANPGKSAECTTAYNNALKEAERTAPKYATREDCVAEFGEGQCQQAPAQAGMAPENQAQAQQSSGSFWMPLMAGYMMGRLMGGGAGFAQQPLFSSKNPASPAYGKYTDAAGKNYGAAQPGRTMTVPKTAMAPKPATTTTVTRGGFGESVAKQSTMQRSAAGTSTRSMGG</sequence>
<gene>
    <name evidence="1" type="primary">ygiB</name>
    <name type="ordered locus">SeSA_A3373</name>
</gene>
<reference key="1">
    <citation type="journal article" date="2011" name="J. Bacteriol.">
        <title>Comparative genomics of 28 Salmonella enterica isolates: evidence for CRISPR-mediated adaptive sublineage evolution.</title>
        <authorList>
            <person name="Fricke W.F."/>
            <person name="Mammel M.K."/>
            <person name="McDermott P.F."/>
            <person name="Tartera C."/>
            <person name="White D.G."/>
            <person name="Leclerc J.E."/>
            <person name="Ravel J."/>
            <person name="Cebula T.A."/>
        </authorList>
    </citation>
    <scope>NUCLEOTIDE SEQUENCE [LARGE SCALE GENOMIC DNA]</scope>
    <source>
        <strain>CVM19633</strain>
    </source>
</reference>
<comment type="similarity">
    <text evidence="1">Belongs to the UPF0441 family.</text>
</comment>
<evidence type="ECO:0000255" key="1">
    <source>
        <dbReference type="HAMAP-Rule" id="MF_01188"/>
    </source>
</evidence>
<evidence type="ECO:0000256" key="2">
    <source>
        <dbReference type="SAM" id="MobiDB-lite"/>
    </source>
</evidence>
<dbReference type="EMBL" id="CP001127">
    <property type="protein sequence ID" value="ACF90346.1"/>
    <property type="molecule type" value="Genomic_DNA"/>
</dbReference>
<dbReference type="RefSeq" id="WP_000831528.1">
    <property type="nucleotide sequence ID" value="NC_011094.1"/>
</dbReference>
<dbReference type="KEGG" id="sew:SeSA_A3373"/>
<dbReference type="HOGENOM" id="CLU_095624_0_0_6"/>
<dbReference type="Proteomes" id="UP000001865">
    <property type="component" value="Chromosome"/>
</dbReference>
<dbReference type="HAMAP" id="MF_01188">
    <property type="entry name" value="UPF0441"/>
    <property type="match status" value="1"/>
</dbReference>
<dbReference type="InterPro" id="IPR009576">
    <property type="entry name" value="Biofilm_formation_YgiB"/>
</dbReference>
<dbReference type="NCBIfam" id="NF008655">
    <property type="entry name" value="PRK11653.1"/>
    <property type="match status" value="1"/>
</dbReference>
<dbReference type="Pfam" id="PF06693">
    <property type="entry name" value="DUF1190"/>
    <property type="match status" value="1"/>
</dbReference>
<protein>
    <recommendedName>
        <fullName evidence="1">UPF0441 protein YgiB</fullName>
    </recommendedName>
</protein>
<feature type="chain" id="PRO_1000138354" description="UPF0441 protein YgiB">
    <location>
        <begin position="1"/>
        <end position="223"/>
    </location>
</feature>
<feature type="region of interest" description="Disordered" evidence="2">
    <location>
        <begin position="178"/>
        <end position="223"/>
    </location>
</feature>
<feature type="compositionally biased region" description="Low complexity" evidence="2">
    <location>
        <begin position="178"/>
        <end position="195"/>
    </location>
</feature>
<feature type="compositionally biased region" description="Polar residues" evidence="2">
    <location>
        <begin position="204"/>
        <end position="223"/>
    </location>
</feature>
<name>YGIB_SALSV</name>